<accession>Q95P65</accession>
<accession>D3TRV7</accession>
<sequence>MKSLIGTLGLYCLFILTNNVVSSYGDDLYPLTIMHTNDFHARFEETNVKGNPCKSGEKCIGGLARVLHTIKKIIKEQEKKNIESLYINAGDNFQGTIWYNIGRWNVTSELMNIQPPDVMVLGNHEFDHGIDGLLPFLNNMDKTEIVVANMDARDEPQVAKKIKPFTIIKKKYRNIGVIGVVVEEVPDLANTGKLKFRNESEAILEAARNLKKEDPSVNIIIVVSHVGFDVDKIIAERTGSEVDIIVGGHSHTVLYTGTPPGPEKPEDNYPYVYNHPSGNKVLVVQAVCHAKYVGNLTVFFDKKGKVVTYEGAPIYMDTKVEQDKDVLEAMKPWRKLIDEKTKLVVGRTNVDLPRDICRSEECALGNLYTDSMIYAFGGKENCKSGSTWTTAPIAFVHAGAMRSSLHQGDILYSDALLLSPFTNMVVAYDLPGAQLKAALEFSAAPKNEDEKRRFLQMSGLKVTYNMSRAANNRIVDLKVRTNVCPYDQYENLDEKKTYRVVSPSFLQGGGDGFKMLRDYAKNIQNQKIDLDALVDYLKKFSPLAPKAEGRITIIH</sequence>
<name>APY_GLOMM</name>
<proteinExistence type="evidence at protein level"/>
<keyword id="KW-0325">Glycoprotein</keyword>
<keyword id="KW-1199">Hemostasis impairing toxin</keyword>
<keyword id="KW-0378">Hydrolase</keyword>
<keyword id="KW-0479">Metal-binding</keyword>
<keyword id="KW-0547">Nucleotide-binding</keyword>
<keyword id="KW-1201">Platelet aggregation inhibiting toxin</keyword>
<keyword id="KW-0964">Secreted</keyword>
<keyword id="KW-0732">Signal</keyword>
<keyword id="KW-0800">Toxin</keyword>
<keyword id="KW-0862">Zinc</keyword>
<protein>
    <recommendedName>
        <fullName evidence="5">5'-nucleotidase-related protein</fullName>
        <shortName evidence="5">5'Nuc</shortName>
        <ecNumber evidence="4">3.6.1.5</ecNumber>
    </recommendedName>
</protein>
<evidence type="ECO:0000250" key="1">
    <source>
        <dbReference type="UniProtKB" id="P21589"/>
    </source>
</evidence>
<evidence type="ECO:0000255" key="2"/>
<evidence type="ECO:0000255" key="3">
    <source>
        <dbReference type="PROSITE-ProRule" id="PRU00498"/>
    </source>
</evidence>
<evidence type="ECO:0000269" key="4">
    <source>
    </source>
</evidence>
<evidence type="ECO:0000303" key="5">
    <source>
    </source>
</evidence>
<evidence type="ECO:0000305" key="6"/>
<evidence type="ECO:0000312" key="7">
    <source>
        <dbReference type="EMBL" id="AAK63848.1"/>
    </source>
</evidence>
<evidence type="ECO:0000312" key="8">
    <source>
        <dbReference type="EMBL" id="ADD20435.1"/>
    </source>
</evidence>
<reference evidence="7" key="1">
    <citation type="submission" date="2001-05" db="EMBL/GenBank/DDBJ databases">
        <title>Cloning and characterization of a 5'-nucleotidase-related protein in the saliva of the tsetse fly Glossina morsitans morsitans.</title>
        <authorList>
            <person name="Van Den Abbeele J."/>
            <person name="Moens L."/>
            <person name="Pays E."/>
            <person name="Coosemans M."/>
        </authorList>
    </citation>
    <scope>NUCLEOTIDE SEQUENCE [MRNA]</scope>
    <source>
        <tissue evidence="7">Salivary gland</tissue>
    </source>
</reference>
<reference evidence="8" key="2">
    <citation type="journal article" date="2010" name="BMC Genomics">
        <title>An insight into the sialome of Glossina morsitans morsitans.</title>
        <authorList>
            <person name="Alves-Silva J."/>
            <person name="Ribeiro J.M."/>
            <person name="Van Den Abbeele J."/>
            <person name="Attardo G."/>
            <person name="Hao Z."/>
            <person name="Haines L.R."/>
            <person name="Soares M.B."/>
            <person name="Berriman M."/>
            <person name="Aksoy S."/>
            <person name="Lehane M.J."/>
        </authorList>
    </citation>
    <scope>NUCLEOTIDE SEQUENCE [LARGE SCALE MRNA]</scope>
    <source>
        <tissue evidence="8">Salivary gland</tissue>
    </source>
</reference>
<reference evidence="6" key="3">
    <citation type="journal article" date="2010" name="PLoS ONE">
        <title>Identification of a tsetse fly salivary protein with dual inhibitory action on human platelet aggregation.</title>
        <authorList>
            <person name="Caljon G."/>
            <person name="De Ridder K."/>
            <person name="De Baetselier P."/>
            <person name="Coosemans M."/>
            <person name="Van Den Abbeele J."/>
        </authorList>
    </citation>
    <scope>FUNCTION</scope>
    <scope>CATALYTIC ACTIVITY</scope>
    <scope>COFACTOR</scope>
    <scope>ACTIVITY REGULATION</scope>
    <scope>BIOPHYSICOCHEMICAL PROPERTIES</scope>
    <scope>SUBCELLULAR LOCATION</scope>
    <scope>TISSUE SPECIFICITY</scope>
    <scope>DISRUPTION PHENOTYPE</scope>
</reference>
<comment type="function">
    <text evidence="4">Facilitates hematophagy by inhibiting ADP-dependent platelet aggregation and promoting disaggregation of ADP-stimulated platelets in the host (PubMed:20351782). Cleaves adenosine triphosphate (ATP) and adenosine diphosphate (ADP) to adenosine monophosphate (AMP) and inorganic phosphate (PubMed:20351782). Interacts with fibrinogen receptor integrin alpha-IIb/beta-3 (ITGA2B/ITGB3) (PubMed:20351782).</text>
</comment>
<comment type="catalytic activity">
    <reaction evidence="4">
        <text>a ribonucleoside 5'-triphosphate + 2 H2O = a ribonucleoside 5'-phosphate + 2 phosphate + 2 H(+)</text>
        <dbReference type="Rhea" id="RHEA:36795"/>
        <dbReference type="ChEBI" id="CHEBI:15377"/>
        <dbReference type="ChEBI" id="CHEBI:15378"/>
        <dbReference type="ChEBI" id="CHEBI:43474"/>
        <dbReference type="ChEBI" id="CHEBI:58043"/>
        <dbReference type="ChEBI" id="CHEBI:61557"/>
        <dbReference type="EC" id="3.6.1.5"/>
    </reaction>
</comment>
<comment type="cofactor">
    <cofactor evidence="4">
        <name>Mg(2+)</name>
        <dbReference type="ChEBI" id="CHEBI:18420"/>
    </cofactor>
    <cofactor evidence="4">
        <name>Mn(2+)</name>
        <dbReference type="ChEBI" id="CHEBI:29035"/>
    </cofactor>
</comment>
<comment type="activity regulation">
    <text evidence="4">DEPC (2 mM), sodium fluoride (10 mM) and 4,4'-Diisothiocyano-2,2'-stilbenedisulfonic acid (DIDS, 100 uM) nearly completely abrogate activity (PubMed:20351782). Concanavalin A enhances activity (PubMed:20351782).</text>
</comment>
<comment type="biophysicochemical properties">
    <kinetics>
        <KM evidence="4">43 uM for ATP</KM>
        <KM evidence="4">49 uM for ADP</KM>
        <Vmax evidence="4">684.0 nmol/min/mg enzyme with ATP as substrate</Vmax>
        <Vmax evidence="4">177.0 nmol/min/mg enzyme with ADP as substrate</Vmax>
        <text evidence="4">kcat is 48.9 min(-1) with ATP as substrate. kcat is 12.7 min(-1) with ADP as substrate.</text>
    </kinetics>
    <phDependence>
        <text evidence="4">Optimum pH is 8.0.</text>
    </phDependence>
    <temperatureDependence>
        <text evidence="4">Optimum temperature is 40 degrees Celsius. Active from 20 to 47 degrees Celsius.</text>
    </temperatureDependence>
</comment>
<comment type="subcellular location">
    <subcellularLocation>
        <location evidence="4">Secreted</location>
    </subcellularLocation>
</comment>
<comment type="tissue specificity">
    <text evidence="4">Salivary gland (at protein level) (PubMed:20351782). Saliva (at protein level) (PubMed:20351782).</text>
</comment>
<comment type="disruption phenotype">
    <text evidence="4">RNAi-mediated knockdown results in reduced feeding capacities: smaller blood meals and longer times to complete blood feeding (PubMed:20351782). Decreased ATPase and ADPase activities in saliva (PubMed:20351782). Reduced ability of saliva to inhibit ADP-induced thrombocyte aggregation (PubMed:20351782). Reduced ability of saliva to disaggregate ADP-triggered platelets (PubMed:20351782).</text>
</comment>
<comment type="similarity">
    <text evidence="6">Belongs to the 5'-nucleotidase family.</text>
</comment>
<organism evidence="7">
    <name type="scientific">Glossina morsitans morsitans</name>
    <name type="common">Savannah tsetse fly</name>
    <dbReference type="NCBI Taxonomy" id="37546"/>
    <lineage>
        <taxon>Eukaryota</taxon>
        <taxon>Metazoa</taxon>
        <taxon>Ecdysozoa</taxon>
        <taxon>Arthropoda</taxon>
        <taxon>Hexapoda</taxon>
        <taxon>Insecta</taxon>
        <taxon>Pterygota</taxon>
        <taxon>Neoptera</taxon>
        <taxon>Endopterygota</taxon>
        <taxon>Diptera</taxon>
        <taxon>Brachycera</taxon>
        <taxon>Muscomorpha</taxon>
        <taxon>Hippoboscoidea</taxon>
        <taxon>Glossinidae</taxon>
        <taxon>Glossina</taxon>
    </lineage>
</organism>
<feature type="signal peptide" evidence="2">
    <location>
        <begin position="1"/>
        <end position="25"/>
    </location>
</feature>
<feature type="chain" id="PRO_5005144710" description="5'-nucleotidase-related protein" evidence="2">
    <location>
        <begin position="26"/>
        <end position="555"/>
    </location>
</feature>
<feature type="binding site" evidence="1">
    <location>
        <position position="38"/>
    </location>
    <ligand>
        <name>a divalent metal cation</name>
        <dbReference type="ChEBI" id="CHEBI:60240"/>
        <label>1</label>
    </ligand>
</feature>
<feature type="binding site" evidence="1">
    <location>
        <position position="38"/>
    </location>
    <ligand>
        <name>a divalent metal cation</name>
        <dbReference type="ChEBI" id="CHEBI:60240"/>
        <label>2</label>
    </ligand>
</feature>
<feature type="binding site" evidence="1">
    <location>
        <position position="40"/>
    </location>
    <ligand>
        <name>a divalent metal cation</name>
        <dbReference type="ChEBI" id="CHEBI:60240"/>
        <label>1</label>
    </ligand>
</feature>
<feature type="binding site" evidence="1">
    <location>
        <position position="91"/>
    </location>
    <ligand>
        <name>a divalent metal cation</name>
        <dbReference type="ChEBI" id="CHEBI:60240"/>
        <label>1</label>
    </ligand>
</feature>
<feature type="binding site" evidence="1">
    <location>
        <position position="91"/>
    </location>
    <ligand>
        <name>a divalent metal cation</name>
        <dbReference type="ChEBI" id="CHEBI:60240"/>
        <label>2</label>
    </ligand>
</feature>
<feature type="binding site" evidence="1">
    <location>
        <position position="123"/>
    </location>
    <ligand>
        <name>a divalent metal cation</name>
        <dbReference type="ChEBI" id="CHEBI:60240"/>
        <label>2</label>
    </ligand>
</feature>
<feature type="binding site" evidence="1">
    <location>
        <position position="225"/>
    </location>
    <ligand>
        <name>a divalent metal cation</name>
        <dbReference type="ChEBI" id="CHEBI:60240"/>
        <label>2</label>
    </ligand>
</feature>
<feature type="binding site" evidence="1">
    <location>
        <position position="249"/>
    </location>
    <ligand>
        <name>a divalent metal cation</name>
        <dbReference type="ChEBI" id="CHEBI:60240"/>
        <label>2</label>
    </ligand>
</feature>
<feature type="binding site" evidence="1">
    <location>
        <position position="358"/>
    </location>
    <ligand>
        <name>AMP</name>
        <dbReference type="ChEBI" id="CHEBI:456215"/>
    </ligand>
</feature>
<feature type="binding site" evidence="1">
    <location>
        <position position="402"/>
    </location>
    <ligand>
        <name>AMP</name>
        <dbReference type="ChEBI" id="CHEBI:456215"/>
    </ligand>
</feature>
<feature type="binding site" evidence="1">
    <location>
        <position position="421"/>
    </location>
    <ligand>
        <name>AMP</name>
        <dbReference type="ChEBI" id="CHEBI:456215"/>
    </ligand>
</feature>
<feature type="binding site" evidence="1">
    <location>
        <position position="505"/>
    </location>
    <ligand>
        <name>AMP</name>
        <dbReference type="ChEBI" id="CHEBI:456215"/>
    </ligand>
</feature>
<feature type="binding site" evidence="1">
    <location>
        <position position="511"/>
    </location>
    <ligand>
        <name>AMP</name>
        <dbReference type="ChEBI" id="CHEBI:456215"/>
    </ligand>
</feature>
<feature type="site" description="Transition state stabilizer" evidence="1">
    <location>
        <position position="124"/>
    </location>
</feature>
<feature type="site" description="Transition state stabilizer" evidence="1">
    <location>
        <position position="127"/>
    </location>
</feature>
<feature type="glycosylation site" description="N-linked (GlcNAc...) asparagine" evidence="3">
    <location>
        <position position="105"/>
    </location>
</feature>
<feature type="glycosylation site" description="N-linked (GlcNAc...) asparagine" evidence="3">
    <location>
        <position position="198"/>
    </location>
</feature>
<feature type="glycosylation site" description="N-linked (GlcNAc...) asparagine" evidence="3">
    <location>
        <position position="295"/>
    </location>
</feature>
<feature type="glycosylation site" description="N-linked (GlcNAc...) asparagine" evidence="3">
    <location>
        <position position="465"/>
    </location>
</feature>
<feature type="sequence conflict" description="In Ref. 2; ADD20435." evidence="6" ref="2">
    <original>R</original>
    <variation>K</variation>
    <location>
        <position position="208"/>
    </location>
</feature>
<feature type="sequence conflict" description="In Ref. 2; ADD20435." evidence="6" ref="2">
    <original>A</original>
    <variation>P</variation>
    <location>
        <position position="470"/>
    </location>
</feature>
<dbReference type="EC" id="3.6.1.5" evidence="4"/>
<dbReference type="EMBL" id="AF384674">
    <property type="protein sequence ID" value="AAK63848.1"/>
    <property type="molecule type" value="mRNA"/>
</dbReference>
<dbReference type="EMBL" id="EZ424159">
    <property type="protein sequence ID" value="ADD20435.1"/>
    <property type="molecule type" value="mRNA"/>
</dbReference>
<dbReference type="Proteomes" id="UP000092444">
    <property type="component" value="Unplaced"/>
</dbReference>
<dbReference type="GO" id="GO:0005615">
    <property type="term" value="C:extracellular space"/>
    <property type="evidence" value="ECO:0000314"/>
    <property type="project" value="UniProtKB"/>
</dbReference>
<dbReference type="GO" id="GO:0005886">
    <property type="term" value="C:plasma membrane"/>
    <property type="evidence" value="ECO:0007669"/>
    <property type="project" value="TreeGrafter"/>
</dbReference>
<dbReference type="GO" id="GO:0008253">
    <property type="term" value="F:5'-nucleotidase activity"/>
    <property type="evidence" value="ECO:0007669"/>
    <property type="project" value="TreeGrafter"/>
</dbReference>
<dbReference type="GO" id="GO:0004050">
    <property type="term" value="F:apyrase activity"/>
    <property type="evidence" value="ECO:0000314"/>
    <property type="project" value="UniProtKB"/>
</dbReference>
<dbReference type="GO" id="GO:0005178">
    <property type="term" value="F:integrin binding"/>
    <property type="evidence" value="ECO:0000314"/>
    <property type="project" value="UniProtKB"/>
</dbReference>
<dbReference type="GO" id="GO:0000287">
    <property type="term" value="F:magnesium ion binding"/>
    <property type="evidence" value="ECO:0000314"/>
    <property type="project" value="UniProtKB"/>
</dbReference>
<dbReference type="GO" id="GO:0030145">
    <property type="term" value="F:manganese ion binding"/>
    <property type="evidence" value="ECO:0000314"/>
    <property type="project" value="UniProtKB"/>
</dbReference>
<dbReference type="GO" id="GO:0000166">
    <property type="term" value="F:nucleotide binding"/>
    <property type="evidence" value="ECO:0000314"/>
    <property type="project" value="UniProtKB"/>
</dbReference>
<dbReference type="GO" id="GO:0090729">
    <property type="term" value="F:toxin activity"/>
    <property type="evidence" value="ECO:0007669"/>
    <property type="project" value="UniProtKB-KW"/>
</dbReference>
<dbReference type="GO" id="GO:0006196">
    <property type="term" value="P:AMP catabolic process"/>
    <property type="evidence" value="ECO:0007669"/>
    <property type="project" value="TreeGrafter"/>
</dbReference>
<dbReference type="GO" id="GO:0035893">
    <property type="term" value="P:suppression of platelet aggregation in another organism"/>
    <property type="evidence" value="ECO:0000314"/>
    <property type="project" value="UniProtKB"/>
</dbReference>
<dbReference type="CDD" id="cd07409">
    <property type="entry name" value="MPP_CD73_N"/>
    <property type="match status" value="1"/>
</dbReference>
<dbReference type="FunFam" id="3.60.21.10:FF:000020">
    <property type="entry name" value="NT5E isoform 4"/>
    <property type="match status" value="1"/>
</dbReference>
<dbReference type="FunFam" id="3.90.780.10:FF:000004">
    <property type="entry name" value="UDP-sugar hydrolase, putative"/>
    <property type="match status" value="1"/>
</dbReference>
<dbReference type="Gene3D" id="3.60.21.10">
    <property type="match status" value="1"/>
</dbReference>
<dbReference type="Gene3D" id="3.90.780.10">
    <property type="entry name" value="5'-Nucleotidase, C-terminal domain"/>
    <property type="match status" value="1"/>
</dbReference>
<dbReference type="InterPro" id="IPR008334">
    <property type="entry name" value="5'-Nucleotdase_C"/>
</dbReference>
<dbReference type="InterPro" id="IPR036907">
    <property type="entry name" value="5'-Nucleotdase_C_sf"/>
</dbReference>
<dbReference type="InterPro" id="IPR006146">
    <property type="entry name" value="5'-Nucleotdase_CS"/>
</dbReference>
<dbReference type="InterPro" id="IPR006179">
    <property type="entry name" value="5_nucleotidase/apyrase"/>
</dbReference>
<dbReference type="InterPro" id="IPR004843">
    <property type="entry name" value="Calcineurin-like_PHP_ApaH"/>
</dbReference>
<dbReference type="InterPro" id="IPR029052">
    <property type="entry name" value="Metallo-depent_PP-like"/>
</dbReference>
<dbReference type="PANTHER" id="PTHR11575">
    <property type="entry name" value="5'-NUCLEOTIDASE-RELATED"/>
    <property type="match status" value="1"/>
</dbReference>
<dbReference type="PANTHER" id="PTHR11575:SF32">
    <property type="entry name" value="APYRASE-LIKE PROTEIN"/>
    <property type="match status" value="1"/>
</dbReference>
<dbReference type="Pfam" id="PF02872">
    <property type="entry name" value="5_nucleotid_C"/>
    <property type="match status" value="1"/>
</dbReference>
<dbReference type="Pfam" id="PF00149">
    <property type="entry name" value="Metallophos"/>
    <property type="match status" value="1"/>
</dbReference>
<dbReference type="PRINTS" id="PR01607">
    <property type="entry name" value="APYRASEFAMLY"/>
</dbReference>
<dbReference type="SUPFAM" id="SSF55816">
    <property type="entry name" value="5'-nucleotidase (syn. UDP-sugar hydrolase), C-terminal domain"/>
    <property type="match status" value="1"/>
</dbReference>
<dbReference type="SUPFAM" id="SSF56300">
    <property type="entry name" value="Metallo-dependent phosphatases"/>
    <property type="match status" value="1"/>
</dbReference>
<dbReference type="PROSITE" id="PS00785">
    <property type="entry name" value="5_NUCLEOTIDASE_1"/>
    <property type="match status" value="1"/>
</dbReference>
<dbReference type="PROSITE" id="PS00786">
    <property type="entry name" value="5_NUCLEOTIDASE_2"/>
    <property type="match status" value="1"/>
</dbReference>